<dbReference type="EMBL" id="AF041254">
    <property type="protein sequence ID" value="AAB97740.1"/>
    <property type="molecule type" value="mRNA"/>
</dbReference>
<dbReference type="EMBL" id="AK289634">
    <property type="protein sequence ID" value="BAF82323.1"/>
    <property type="molecule type" value="mRNA"/>
</dbReference>
<dbReference type="EMBL" id="CH471139">
    <property type="protein sequence ID" value="EAW68954.1"/>
    <property type="molecule type" value="Genomic_DNA"/>
</dbReference>
<dbReference type="EMBL" id="CH471139">
    <property type="protein sequence ID" value="EAW68955.1"/>
    <property type="molecule type" value="Genomic_DNA"/>
</dbReference>
<dbReference type="EMBL" id="BC033628">
    <property type="protein sequence ID" value="AAH33628.1"/>
    <property type="molecule type" value="mRNA"/>
</dbReference>
<dbReference type="CCDS" id="CCDS12192.1"/>
<dbReference type="RefSeq" id="NP_006342.2">
    <property type="nucleotide sequence ID" value="NM_006351.3"/>
</dbReference>
<dbReference type="PDB" id="2CW9">
    <property type="method" value="X-ray"/>
    <property type="resolution" value="1.90 A"/>
    <property type="chains" value="A=266-452"/>
</dbReference>
<dbReference type="PDBsum" id="2CW9"/>
<dbReference type="SMR" id="O43615"/>
<dbReference type="BioGRID" id="115732">
    <property type="interactions" value="259"/>
</dbReference>
<dbReference type="ComplexPortal" id="CPX-6129">
    <property type="entry name" value="TIM23 mitochondrial inner membrane pre-sequence translocase complex, TIM17A variant"/>
</dbReference>
<dbReference type="ComplexPortal" id="CPX-6130">
    <property type="entry name" value="TIM23 mitochondrial inner membrane pre-sequence translocase complex, TIM17B variant"/>
</dbReference>
<dbReference type="CORUM" id="O43615"/>
<dbReference type="FunCoup" id="O43615">
    <property type="interactions" value="2579"/>
</dbReference>
<dbReference type="IntAct" id="O43615">
    <property type="interactions" value="91"/>
</dbReference>
<dbReference type="MINT" id="O43615"/>
<dbReference type="STRING" id="9606.ENSP00000270538"/>
<dbReference type="GlyGen" id="O43615">
    <property type="glycosylation" value="4 sites, 1 O-linked glycan (4 sites)"/>
</dbReference>
<dbReference type="iPTMnet" id="O43615"/>
<dbReference type="MetOSite" id="O43615"/>
<dbReference type="PhosphoSitePlus" id="O43615"/>
<dbReference type="SwissPalm" id="O43615"/>
<dbReference type="BioMuta" id="TIMM44"/>
<dbReference type="jPOST" id="O43615"/>
<dbReference type="MassIVE" id="O43615"/>
<dbReference type="PaxDb" id="9606-ENSP00000270538"/>
<dbReference type="PeptideAtlas" id="O43615"/>
<dbReference type="ProteomicsDB" id="49083"/>
<dbReference type="Pumba" id="O43615"/>
<dbReference type="Antibodypedia" id="24720">
    <property type="antibodies" value="67 antibodies from 22 providers"/>
</dbReference>
<dbReference type="DNASU" id="10469"/>
<dbReference type="Ensembl" id="ENST00000270538.8">
    <property type="protein sequence ID" value="ENSP00000270538.2"/>
    <property type="gene ID" value="ENSG00000104980.8"/>
</dbReference>
<dbReference type="GeneID" id="10469"/>
<dbReference type="KEGG" id="hsa:10469"/>
<dbReference type="MANE-Select" id="ENST00000270538.8">
    <property type="protein sequence ID" value="ENSP00000270538.2"/>
    <property type="RefSeq nucleotide sequence ID" value="NM_006351.4"/>
    <property type="RefSeq protein sequence ID" value="NP_006342.2"/>
</dbReference>
<dbReference type="UCSC" id="uc002miz.4">
    <property type="organism name" value="human"/>
</dbReference>
<dbReference type="AGR" id="HGNC:17316"/>
<dbReference type="CTD" id="10469"/>
<dbReference type="DisGeNET" id="10469"/>
<dbReference type="GeneCards" id="TIMM44"/>
<dbReference type="HGNC" id="HGNC:17316">
    <property type="gene designation" value="TIMM44"/>
</dbReference>
<dbReference type="HPA" id="ENSG00000104980">
    <property type="expression patterns" value="Low tissue specificity"/>
</dbReference>
<dbReference type="MalaCards" id="TIMM44"/>
<dbReference type="MIM" id="605058">
    <property type="type" value="gene"/>
</dbReference>
<dbReference type="neXtProt" id="NX_O43615"/>
<dbReference type="OpenTargets" id="ENSG00000104980"/>
<dbReference type="PharmGKB" id="PA38229"/>
<dbReference type="VEuPathDB" id="HostDB:ENSG00000104980"/>
<dbReference type="eggNOG" id="KOG2580">
    <property type="taxonomic scope" value="Eukaryota"/>
</dbReference>
<dbReference type="GeneTree" id="ENSGT00390000000051"/>
<dbReference type="HOGENOM" id="CLU_020932_1_1_1"/>
<dbReference type="InParanoid" id="O43615"/>
<dbReference type="OMA" id="NFQMEPF"/>
<dbReference type="OrthoDB" id="10265990at2759"/>
<dbReference type="PAN-GO" id="O43615">
    <property type="GO annotations" value="3 GO annotations based on evolutionary models"/>
</dbReference>
<dbReference type="PhylomeDB" id="O43615"/>
<dbReference type="TreeFam" id="TF106197"/>
<dbReference type="PathwayCommons" id="O43615"/>
<dbReference type="Reactome" id="R-HSA-1268020">
    <property type="pathway name" value="Mitochondrial protein import"/>
</dbReference>
<dbReference type="SignaLink" id="O43615"/>
<dbReference type="SIGNOR" id="O43615"/>
<dbReference type="BioGRID-ORCS" id="10469">
    <property type="hits" value="689 hits in 1155 CRISPR screens"/>
</dbReference>
<dbReference type="CD-CODE" id="91857CE7">
    <property type="entry name" value="Nucleolus"/>
</dbReference>
<dbReference type="ChiTaRS" id="TIMM44">
    <property type="organism name" value="human"/>
</dbReference>
<dbReference type="EvolutionaryTrace" id="O43615"/>
<dbReference type="GeneWiki" id="TIMM44"/>
<dbReference type="GenomeRNAi" id="10469"/>
<dbReference type="Pharos" id="O43615">
    <property type="development level" value="Tbio"/>
</dbReference>
<dbReference type="PRO" id="PR:O43615"/>
<dbReference type="Proteomes" id="UP000005640">
    <property type="component" value="Chromosome 19"/>
</dbReference>
<dbReference type="RNAct" id="O43615">
    <property type="molecule type" value="protein"/>
</dbReference>
<dbReference type="Bgee" id="ENSG00000104980">
    <property type="expression patterns" value="Expressed in apex of heart and 180 other cell types or tissues"/>
</dbReference>
<dbReference type="ExpressionAtlas" id="O43615">
    <property type="expression patterns" value="baseline and differential"/>
</dbReference>
<dbReference type="GO" id="GO:0001650">
    <property type="term" value="C:fibrillar center"/>
    <property type="evidence" value="ECO:0000314"/>
    <property type="project" value="HPA"/>
</dbReference>
<dbReference type="GO" id="GO:0005743">
    <property type="term" value="C:mitochondrial inner membrane"/>
    <property type="evidence" value="ECO:0000314"/>
    <property type="project" value="BHF-UCL"/>
</dbReference>
<dbReference type="GO" id="GO:0005759">
    <property type="term" value="C:mitochondrial matrix"/>
    <property type="evidence" value="ECO:0000314"/>
    <property type="project" value="BHF-UCL"/>
</dbReference>
<dbReference type="GO" id="GO:0005739">
    <property type="term" value="C:mitochondrion"/>
    <property type="evidence" value="ECO:0000314"/>
    <property type="project" value="HPA"/>
</dbReference>
<dbReference type="GO" id="GO:0005744">
    <property type="term" value="C:TIM23 mitochondrial import inner membrane translocase complex"/>
    <property type="evidence" value="ECO:0000314"/>
    <property type="project" value="FlyBase"/>
</dbReference>
<dbReference type="GO" id="GO:0005524">
    <property type="term" value="F:ATP binding"/>
    <property type="evidence" value="ECO:0007669"/>
    <property type="project" value="UniProtKB-KW"/>
</dbReference>
<dbReference type="GO" id="GO:0051087">
    <property type="term" value="F:protein-folding chaperone binding"/>
    <property type="evidence" value="ECO:0000318"/>
    <property type="project" value="GO_Central"/>
</dbReference>
<dbReference type="GO" id="GO:0006886">
    <property type="term" value="P:intracellular protein transport"/>
    <property type="evidence" value="ECO:0000303"/>
    <property type="project" value="ComplexPortal"/>
</dbReference>
<dbReference type="GO" id="GO:0030150">
    <property type="term" value="P:protein import into mitochondrial matrix"/>
    <property type="evidence" value="ECO:0000318"/>
    <property type="project" value="GO_Central"/>
</dbReference>
<dbReference type="GO" id="GO:0006626">
    <property type="term" value="P:protein targeting to mitochondrion"/>
    <property type="evidence" value="ECO:0000304"/>
    <property type="project" value="ProtInc"/>
</dbReference>
<dbReference type="FunFam" id="3.10.450.240:FF:000001">
    <property type="entry name" value="Mitochondrial import inner membrane translocase subunit TIM44"/>
    <property type="match status" value="1"/>
</dbReference>
<dbReference type="Gene3D" id="3.10.450.240">
    <property type="match status" value="1"/>
</dbReference>
<dbReference type="InterPro" id="IPR032710">
    <property type="entry name" value="NTF2-like_dom_sf"/>
</dbReference>
<dbReference type="InterPro" id="IPR017303">
    <property type="entry name" value="Tim44"/>
</dbReference>
<dbReference type="InterPro" id="IPR039544">
    <property type="entry name" value="Tim44-like"/>
</dbReference>
<dbReference type="InterPro" id="IPR007379">
    <property type="entry name" value="Tim44-like_dom"/>
</dbReference>
<dbReference type="NCBIfam" id="TIGR00984">
    <property type="entry name" value="3a0801s03tim44"/>
    <property type="match status" value="1"/>
</dbReference>
<dbReference type="PANTHER" id="PTHR10721">
    <property type="entry name" value="MITOCHONDRIAL IMPORT INNER MEMBRANE TRANSLOCASE SUBUNIT TIM44"/>
    <property type="match status" value="1"/>
</dbReference>
<dbReference type="PANTHER" id="PTHR10721:SF1">
    <property type="entry name" value="MITOCHONDRIAL IMPORT INNER MEMBRANE TRANSLOCASE SUBUNIT TIM44"/>
    <property type="match status" value="1"/>
</dbReference>
<dbReference type="Pfam" id="PF04280">
    <property type="entry name" value="Tim44"/>
    <property type="match status" value="1"/>
</dbReference>
<dbReference type="PIRSF" id="PIRSF037871">
    <property type="entry name" value="TIM44"/>
    <property type="match status" value="1"/>
</dbReference>
<dbReference type="SMART" id="SM00978">
    <property type="entry name" value="Tim44"/>
    <property type="match status" value="1"/>
</dbReference>
<dbReference type="SUPFAM" id="SSF54427">
    <property type="entry name" value="NTF2-like"/>
    <property type="match status" value="1"/>
</dbReference>
<evidence type="ECO:0000250" key="1">
    <source>
        <dbReference type="UniProtKB" id="O35857"/>
    </source>
</evidence>
<evidence type="ECO:0000250" key="2">
    <source>
        <dbReference type="UniProtKB" id="Q01852"/>
    </source>
</evidence>
<evidence type="ECO:0000255" key="3"/>
<evidence type="ECO:0000269" key="4">
    <source>
    </source>
</evidence>
<evidence type="ECO:0000305" key="5"/>
<evidence type="ECO:0007744" key="6">
    <source>
    </source>
</evidence>
<evidence type="ECO:0007744" key="7">
    <source>
    </source>
</evidence>
<evidence type="ECO:0007829" key="8">
    <source>
        <dbReference type="PDB" id="2CW9"/>
    </source>
</evidence>
<organism>
    <name type="scientific">Homo sapiens</name>
    <name type="common">Human</name>
    <dbReference type="NCBI Taxonomy" id="9606"/>
    <lineage>
        <taxon>Eukaryota</taxon>
        <taxon>Metazoa</taxon>
        <taxon>Chordata</taxon>
        <taxon>Craniata</taxon>
        <taxon>Vertebrata</taxon>
        <taxon>Euteleostomi</taxon>
        <taxon>Mammalia</taxon>
        <taxon>Eutheria</taxon>
        <taxon>Euarchontoglires</taxon>
        <taxon>Primates</taxon>
        <taxon>Haplorrhini</taxon>
        <taxon>Catarrhini</taxon>
        <taxon>Hominidae</taxon>
        <taxon>Homo</taxon>
    </lineage>
</organism>
<name>TIM44_HUMAN</name>
<keyword id="KW-0002">3D-structure</keyword>
<keyword id="KW-0067">ATP-binding</keyword>
<keyword id="KW-0472">Membrane</keyword>
<keyword id="KW-0496">Mitochondrion</keyword>
<keyword id="KW-0999">Mitochondrion inner membrane</keyword>
<keyword id="KW-0547">Nucleotide-binding</keyword>
<keyword id="KW-0597">Phosphoprotein</keyword>
<keyword id="KW-0653">Protein transport</keyword>
<keyword id="KW-1267">Proteomics identification</keyword>
<keyword id="KW-1185">Reference proteome</keyword>
<keyword id="KW-0809">Transit peptide</keyword>
<keyword id="KW-0811">Translocation</keyword>
<keyword id="KW-0813">Transport</keyword>
<accession>O43615</accession>
<accession>A8K0R9</accession>
<accession>D6W664</accession>
<accession>Q8N193</accession>
<comment type="function">
    <text evidence="1 2">Essential component of the PAM complex, a complex required for the translocation of transit peptide-containing proteins from the inner membrane into the mitochondrial matrix in an ATP-dependent manner (By similarity). Recruits mitochondrial HSP70 to drive protein translocation into the matrix using ATP as an energy source (By similarity).</text>
</comment>
<comment type="subunit">
    <text evidence="1 2">Probable component of the PAM complex at least composed of a mitochondrial HSP70 protein, GRPEL1 or GRPEL2, TIMM44, TIMM16/PAM16 and TIMM14/DNAJC19 (By similarity). The complex interacts with the TIMM23 component of the TIM23 complex. Interacts with SLC25A4/ANT1 and SLC25A5/ANT2; leading to inhibit the presequence translocase TIMM23, thereby promoting stabilization of PINK1 (By similarity).</text>
</comment>
<comment type="interaction">
    <interactant intactId="EBI-861737">
        <id>O43615</id>
    </interactant>
    <interactant intactId="EBI-365961">
        <id>P10398</id>
        <label>ARAF</label>
    </interactant>
    <organismsDiffer>false</organismsDiffer>
    <experiments>3</experiments>
</comment>
<comment type="interaction">
    <interactant intactId="EBI-861737">
        <id>O43615</id>
    </interactant>
    <interactant intactId="EBI-10961624">
        <id>Q2TAC2-2</id>
        <label>CCDC57</label>
    </interactant>
    <organismsDiffer>false</organismsDiffer>
    <experiments>3</experiments>
</comment>
<comment type="interaction">
    <interactant intactId="EBI-861737">
        <id>O43615</id>
    </interactant>
    <interactant intactId="EBI-2548702">
        <id>Q96DZ9</id>
        <label>CMTM5</label>
    </interactant>
    <organismsDiffer>false</organismsDiffer>
    <experiments>3</experiments>
</comment>
<comment type="interaction">
    <interactant intactId="EBI-861737">
        <id>O43615</id>
    </interactant>
    <interactant intactId="EBI-11522780">
        <id>Q96DZ9-2</id>
        <label>CMTM5</label>
    </interactant>
    <organismsDiffer>false</organismsDiffer>
    <experiments>3</experiments>
</comment>
<comment type="interaction">
    <interactant intactId="EBI-861737">
        <id>O43615</id>
    </interactant>
    <interactant intactId="EBI-750300">
        <id>Q01658</id>
        <label>DR1</label>
    </interactant>
    <organismsDiffer>false</organismsDiffer>
    <experiments>3</experiments>
</comment>
<comment type="interaction">
    <interactant intactId="EBI-861737">
        <id>O43615</id>
    </interactant>
    <interactant intactId="EBI-389564">
        <id>Q00403</id>
        <label>GTF2B</label>
    </interactant>
    <organismsDiffer>false</organismsDiffer>
    <experiments>3</experiments>
</comment>
<comment type="interaction">
    <interactant intactId="EBI-861737">
        <id>O43615</id>
    </interactant>
    <interactant intactId="EBI-1054873">
        <id>Q9Y5Q9</id>
        <label>GTF3C3</label>
    </interactant>
    <organismsDiffer>false</organismsDiffer>
    <experiments>3</experiments>
</comment>
<comment type="interaction">
    <interactant intactId="EBI-861737">
        <id>O43615</id>
    </interactant>
    <interactant intactId="EBI-4402330">
        <id>O95562</id>
        <label>SFT2D2</label>
    </interactant>
    <organismsDiffer>false</organismsDiffer>
    <experiments>3</experiments>
</comment>
<comment type="interaction">
    <interactant intactId="EBI-861737">
        <id>O43615</id>
    </interactant>
    <interactant intactId="EBI-7353612">
        <id>P57075-2</id>
        <label>UBASH3A</label>
    </interactant>
    <organismsDiffer>false</organismsDiffer>
    <experiments>3</experiments>
</comment>
<comment type="subcellular location">
    <subcellularLocation>
        <location evidence="4">Mitochondrion inner membrane</location>
        <topology evidence="4">Peripheral membrane protein</topology>
        <orientation evidence="4">Matrix side</orientation>
    </subcellularLocation>
    <subcellularLocation>
        <location evidence="4">Mitochondrion matrix</location>
    </subcellularLocation>
</comment>
<comment type="similarity">
    <text evidence="5">Belongs to the Tim44 family.</text>
</comment>
<gene>
    <name type="primary">TIMM44</name>
    <name type="synonym">MIMT44</name>
    <name type="synonym">TIM44</name>
</gene>
<feature type="transit peptide" description="Mitochondrion" evidence="3">
    <location>
        <begin position="1"/>
        <end status="unknown"/>
    </location>
</feature>
<feature type="chain" id="PRO_0000034314" description="Mitochondrial import inner membrane translocase subunit TIM44">
    <location>
        <begin status="unknown"/>
        <end position="452"/>
    </location>
</feature>
<feature type="binding site" evidence="3">
    <location>
        <begin position="166"/>
        <end position="173"/>
    </location>
    <ligand>
        <name>ATP</name>
        <dbReference type="ChEBI" id="CHEBI:30616"/>
    </ligand>
</feature>
<feature type="modified residue" description="Phosphothreonine" evidence="7">
    <location>
        <position position="128"/>
    </location>
</feature>
<feature type="modified residue" description="Phosphoserine" evidence="6 7">
    <location>
        <position position="180"/>
    </location>
</feature>
<feature type="modified residue" description="N6-succinyllysine" evidence="1">
    <location>
        <position position="217"/>
    </location>
</feature>
<feature type="sequence conflict" description="In Ref. 1; AAB97740." evidence="5" ref="1">
    <original>E</original>
    <variation>A</variation>
    <location>
        <position position="189"/>
    </location>
</feature>
<feature type="sequence conflict" description="In Ref. 1; AAB97740." evidence="5" ref="1">
    <original>P</original>
    <variation>A</variation>
    <location>
        <position position="226"/>
    </location>
</feature>
<feature type="helix" evidence="8">
    <location>
        <begin position="271"/>
        <end position="286"/>
    </location>
</feature>
<feature type="helix" evidence="8">
    <location>
        <begin position="292"/>
        <end position="306"/>
    </location>
</feature>
<feature type="helix" evidence="8">
    <location>
        <begin position="312"/>
        <end position="321"/>
    </location>
</feature>
<feature type="helix" evidence="8">
    <location>
        <begin position="323"/>
        <end position="333"/>
    </location>
</feature>
<feature type="helix" evidence="8">
    <location>
        <begin position="336"/>
        <end position="342"/>
    </location>
</feature>
<feature type="helix" evidence="8">
    <location>
        <begin position="345"/>
        <end position="360"/>
    </location>
</feature>
<feature type="strand" evidence="8">
    <location>
        <begin position="368"/>
        <end position="383"/>
    </location>
</feature>
<feature type="strand" evidence="8">
    <location>
        <begin position="386"/>
        <end position="398"/>
    </location>
</feature>
<feature type="strand" evidence="8">
    <location>
        <begin position="400"/>
        <end position="402"/>
    </location>
</feature>
<feature type="strand" evidence="8">
    <location>
        <begin position="408"/>
        <end position="411"/>
    </location>
</feature>
<feature type="strand" evidence="8">
    <location>
        <begin position="417"/>
        <end position="427"/>
    </location>
</feature>
<feature type="helix" evidence="8">
    <location>
        <begin position="434"/>
        <end position="436"/>
    </location>
</feature>
<feature type="strand" evidence="8">
    <location>
        <begin position="438"/>
        <end position="447"/>
    </location>
</feature>
<reference key="1">
    <citation type="journal article" date="1999" name="J. Mol. Biol.">
        <title>Genetic and structural characterization of the human mitochondrial inner membrane translocase.</title>
        <authorList>
            <person name="Bauer M.F."/>
            <person name="Gempel K."/>
            <person name="Reichert A.S."/>
            <person name="Rappold G.A."/>
            <person name="Lichtner P."/>
            <person name="Gerbitz K.-D."/>
            <person name="Neupert W."/>
            <person name="Brunner M."/>
            <person name="Hofmann S."/>
        </authorList>
    </citation>
    <scope>NUCLEOTIDE SEQUENCE [MRNA]</scope>
    <scope>SUBCELLULAR LOCATION</scope>
    <source>
        <tissue>Skeletal muscle</tissue>
    </source>
</reference>
<reference key="2">
    <citation type="journal article" date="2004" name="Nat. Genet.">
        <title>Complete sequencing and characterization of 21,243 full-length human cDNAs.</title>
        <authorList>
            <person name="Ota T."/>
            <person name="Suzuki Y."/>
            <person name="Nishikawa T."/>
            <person name="Otsuki T."/>
            <person name="Sugiyama T."/>
            <person name="Irie R."/>
            <person name="Wakamatsu A."/>
            <person name="Hayashi K."/>
            <person name="Sato H."/>
            <person name="Nagai K."/>
            <person name="Kimura K."/>
            <person name="Makita H."/>
            <person name="Sekine M."/>
            <person name="Obayashi M."/>
            <person name="Nishi T."/>
            <person name="Shibahara T."/>
            <person name="Tanaka T."/>
            <person name="Ishii S."/>
            <person name="Yamamoto J."/>
            <person name="Saito K."/>
            <person name="Kawai Y."/>
            <person name="Isono Y."/>
            <person name="Nakamura Y."/>
            <person name="Nagahari K."/>
            <person name="Murakami K."/>
            <person name="Yasuda T."/>
            <person name="Iwayanagi T."/>
            <person name="Wagatsuma M."/>
            <person name="Shiratori A."/>
            <person name="Sudo H."/>
            <person name="Hosoiri T."/>
            <person name="Kaku Y."/>
            <person name="Kodaira H."/>
            <person name="Kondo H."/>
            <person name="Sugawara M."/>
            <person name="Takahashi M."/>
            <person name="Kanda K."/>
            <person name="Yokoi T."/>
            <person name="Furuya T."/>
            <person name="Kikkawa E."/>
            <person name="Omura Y."/>
            <person name="Abe K."/>
            <person name="Kamihara K."/>
            <person name="Katsuta N."/>
            <person name="Sato K."/>
            <person name="Tanikawa M."/>
            <person name="Yamazaki M."/>
            <person name="Ninomiya K."/>
            <person name="Ishibashi T."/>
            <person name="Yamashita H."/>
            <person name="Murakawa K."/>
            <person name="Fujimori K."/>
            <person name="Tanai H."/>
            <person name="Kimata M."/>
            <person name="Watanabe M."/>
            <person name="Hiraoka S."/>
            <person name="Chiba Y."/>
            <person name="Ishida S."/>
            <person name="Ono Y."/>
            <person name="Takiguchi S."/>
            <person name="Watanabe S."/>
            <person name="Yosida M."/>
            <person name="Hotuta T."/>
            <person name="Kusano J."/>
            <person name="Kanehori K."/>
            <person name="Takahashi-Fujii A."/>
            <person name="Hara H."/>
            <person name="Tanase T.-O."/>
            <person name="Nomura Y."/>
            <person name="Togiya S."/>
            <person name="Komai F."/>
            <person name="Hara R."/>
            <person name="Takeuchi K."/>
            <person name="Arita M."/>
            <person name="Imose N."/>
            <person name="Musashino K."/>
            <person name="Yuuki H."/>
            <person name="Oshima A."/>
            <person name="Sasaki N."/>
            <person name="Aotsuka S."/>
            <person name="Yoshikawa Y."/>
            <person name="Matsunawa H."/>
            <person name="Ichihara T."/>
            <person name="Shiohata N."/>
            <person name="Sano S."/>
            <person name="Moriya S."/>
            <person name="Momiyama H."/>
            <person name="Satoh N."/>
            <person name="Takami S."/>
            <person name="Terashima Y."/>
            <person name="Suzuki O."/>
            <person name="Nakagawa S."/>
            <person name="Senoh A."/>
            <person name="Mizoguchi H."/>
            <person name="Goto Y."/>
            <person name="Shimizu F."/>
            <person name="Wakebe H."/>
            <person name="Hishigaki H."/>
            <person name="Watanabe T."/>
            <person name="Sugiyama A."/>
            <person name="Takemoto M."/>
            <person name="Kawakami B."/>
            <person name="Yamazaki M."/>
            <person name="Watanabe K."/>
            <person name="Kumagai A."/>
            <person name="Itakura S."/>
            <person name="Fukuzumi Y."/>
            <person name="Fujimori Y."/>
            <person name="Komiyama M."/>
            <person name="Tashiro H."/>
            <person name="Tanigami A."/>
            <person name="Fujiwara T."/>
            <person name="Ono T."/>
            <person name="Yamada K."/>
            <person name="Fujii Y."/>
            <person name="Ozaki K."/>
            <person name="Hirao M."/>
            <person name="Ohmori Y."/>
            <person name="Kawabata A."/>
            <person name="Hikiji T."/>
            <person name="Kobatake N."/>
            <person name="Inagaki H."/>
            <person name="Ikema Y."/>
            <person name="Okamoto S."/>
            <person name="Okitani R."/>
            <person name="Kawakami T."/>
            <person name="Noguchi S."/>
            <person name="Itoh T."/>
            <person name="Shigeta K."/>
            <person name="Senba T."/>
            <person name="Matsumura K."/>
            <person name="Nakajima Y."/>
            <person name="Mizuno T."/>
            <person name="Morinaga M."/>
            <person name="Sasaki M."/>
            <person name="Togashi T."/>
            <person name="Oyama M."/>
            <person name="Hata H."/>
            <person name="Watanabe M."/>
            <person name="Komatsu T."/>
            <person name="Mizushima-Sugano J."/>
            <person name="Satoh T."/>
            <person name="Shirai Y."/>
            <person name="Takahashi Y."/>
            <person name="Nakagawa K."/>
            <person name="Okumura K."/>
            <person name="Nagase T."/>
            <person name="Nomura N."/>
            <person name="Kikuchi H."/>
            <person name="Masuho Y."/>
            <person name="Yamashita R."/>
            <person name="Nakai K."/>
            <person name="Yada T."/>
            <person name="Nakamura Y."/>
            <person name="Ohara O."/>
            <person name="Isogai T."/>
            <person name="Sugano S."/>
        </authorList>
    </citation>
    <scope>NUCLEOTIDE SEQUENCE [LARGE SCALE MRNA]</scope>
    <source>
        <tissue>Amygdala</tissue>
    </source>
</reference>
<reference key="3">
    <citation type="submission" date="2005-09" db="EMBL/GenBank/DDBJ databases">
        <authorList>
            <person name="Mural R.J."/>
            <person name="Istrail S."/>
            <person name="Sutton G.G."/>
            <person name="Florea L."/>
            <person name="Halpern A.L."/>
            <person name="Mobarry C.M."/>
            <person name="Lippert R."/>
            <person name="Walenz B."/>
            <person name="Shatkay H."/>
            <person name="Dew I."/>
            <person name="Miller J.R."/>
            <person name="Flanigan M.J."/>
            <person name="Edwards N.J."/>
            <person name="Bolanos R."/>
            <person name="Fasulo D."/>
            <person name="Halldorsson B.V."/>
            <person name="Hannenhalli S."/>
            <person name="Turner R."/>
            <person name="Yooseph S."/>
            <person name="Lu F."/>
            <person name="Nusskern D.R."/>
            <person name="Shue B.C."/>
            <person name="Zheng X.H."/>
            <person name="Zhong F."/>
            <person name="Delcher A.L."/>
            <person name="Huson D.H."/>
            <person name="Kravitz S.A."/>
            <person name="Mouchard L."/>
            <person name="Reinert K."/>
            <person name="Remington K.A."/>
            <person name="Clark A.G."/>
            <person name="Waterman M.S."/>
            <person name="Eichler E.E."/>
            <person name="Adams M.D."/>
            <person name="Hunkapiller M.W."/>
            <person name="Myers E.W."/>
            <person name="Venter J.C."/>
        </authorList>
    </citation>
    <scope>NUCLEOTIDE SEQUENCE [LARGE SCALE GENOMIC DNA]</scope>
</reference>
<reference key="4">
    <citation type="journal article" date="2004" name="Genome Res.">
        <title>The status, quality, and expansion of the NIH full-length cDNA project: the Mammalian Gene Collection (MGC).</title>
        <authorList>
            <consortium name="The MGC Project Team"/>
        </authorList>
    </citation>
    <scope>NUCLEOTIDE SEQUENCE [LARGE SCALE MRNA]</scope>
    <source>
        <tissue>Brain</tissue>
    </source>
</reference>
<reference key="5">
    <citation type="journal article" date="2011" name="BMC Syst. Biol.">
        <title>Initial characterization of the human central proteome.</title>
        <authorList>
            <person name="Burkard T.R."/>
            <person name="Planyavsky M."/>
            <person name="Kaupe I."/>
            <person name="Breitwieser F.P."/>
            <person name="Buerckstuemmer T."/>
            <person name="Bennett K.L."/>
            <person name="Superti-Furga G."/>
            <person name="Colinge J."/>
        </authorList>
    </citation>
    <scope>IDENTIFICATION BY MASS SPECTROMETRY [LARGE SCALE ANALYSIS]</scope>
</reference>
<reference key="6">
    <citation type="journal article" date="2011" name="Sci. Signal.">
        <title>System-wide temporal characterization of the proteome and phosphoproteome of human embryonic stem cell differentiation.</title>
        <authorList>
            <person name="Rigbolt K.T."/>
            <person name="Prokhorova T.A."/>
            <person name="Akimov V."/>
            <person name="Henningsen J."/>
            <person name="Johansen P.T."/>
            <person name="Kratchmarova I."/>
            <person name="Kassem M."/>
            <person name="Mann M."/>
            <person name="Olsen J.V."/>
            <person name="Blagoev B."/>
        </authorList>
    </citation>
    <scope>PHOSPHORYLATION [LARGE SCALE ANALYSIS] AT SER-180</scope>
    <scope>IDENTIFICATION BY MASS SPECTROMETRY [LARGE SCALE ANALYSIS]</scope>
</reference>
<reference key="7">
    <citation type="journal article" date="2013" name="J. Proteome Res.">
        <title>Toward a comprehensive characterization of a human cancer cell phosphoproteome.</title>
        <authorList>
            <person name="Zhou H."/>
            <person name="Di Palma S."/>
            <person name="Preisinger C."/>
            <person name="Peng M."/>
            <person name="Polat A.N."/>
            <person name="Heck A.J."/>
            <person name="Mohammed S."/>
        </authorList>
    </citation>
    <scope>PHOSPHORYLATION [LARGE SCALE ANALYSIS] AT THR-128 AND SER-180</scope>
    <scope>IDENTIFICATION BY MASS SPECTROMETRY [LARGE SCALE ANALYSIS]</scope>
    <source>
        <tissue>Cervix carcinoma</tissue>
        <tissue>Erythroleukemia</tissue>
    </source>
</reference>
<reference key="8">
    <citation type="journal article" date="2015" name="Proteomics">
        <title>N-terminome analysis of the human mitochondrial proteome.</title>
        <authorList>
            <person name="Vaca Jacome A.S."/>
            <person name="Rabilloud T."/>
            <person name="Schaeffer-Reiss C."/>
            <person name="Rompais M."/>
            <person name="Ayoub D."/>
            <person name="Lane L."/>
            <person name="Bairoch A."/>
            <person name="Van Dorsselaer A."/>
            <person name="Carapito C."/>
        </authorList>
    </citation>
    <scope>IDENTIFICATION BY MASS SPECTROMETRY [LARGE SCALE ANALYSIS]</scope>
</reference>
<reference key="9">
    <citation type="journal article" date="2007" name="Acta Crystallogr. D">
        <title>Structure of the human Tim44 C-terminal domain in complex with pentaethylene glycol: ligand-bound form.</title>
        <authorList>
            <person name="Handa N."/>
            <person name="Kishishita S."/>
            <person name="Morita S."/>
            <person name="Akasaka R."/>
            <person name="Jin Z."/>
            <person name="Chrzas J."/>
            <person name="Chen L."/>
            <person name="Liu Z.J."/>
            <person name="Wang B.C."/>
            <person name="Sugano S."/>
            <person name="Tanaka A."/>
            <person name="Terada T."/>
            <person name="Shirouzu M."/>
            <person name="Yokoyama S."/>
        </authorList>
    </citation>
    <scope>X-RAY CRYSTALLOGRAPHY (1.90 ANGSTROMS) OF 266-452</scope>
</reference>
<proteinExistence type="evidence at protein level"/>
<sequence>MAAAALRSGWCRCPRRCLGSGIQFLSSHNLPHGSTYQMRRPGGELPLSKSYSSGNRKGFLSGLLDNVKQELAKNKEMKESIKKFRDEARRLEESDVLQEARRKYKTIESETVRTSEVLRKKLGELTGTVKESLHEVSKSDLGRKIKEGVEEAAKTAKQSAESVSKGGEKLGRTAAFRALSQGVESVKKEIDDSVLGQTGPYRRPQRLRKRTEFAGDKFKEEKVFEPNEEALGVVLHKDSKWYQQWKDFKENNVVFNRFFEMKMKYDESDNAFIRASRALTDKVTDLLGGLFSKTEMSEVLTEILRVDPAFDKDRFLKQCENDIIPNVLEAMISGELDILKDWCYEATYSQLAHPIQQAKALGLQFHSRILDIDNVDLAMGKMMEQGPVLIITFQAQLVMVVRNPKGEVVEGDPDKVLRMLYVWALCRDQDELNPYAAWRLLDISASSTEQIL</sequence>
<protein>
    <recommendedName>
        <fullName>Mitochondrial import inner membrane translocase subunit TIM44</fullName>
    </recommendedName>
</protein>